<reference key="1">
    <citation type="journal article" date="2004" name="Proc. Natl. Acad. Sci. U.S.A.">
        <title>The diploid genome sequence of Candida albicans.</title>
        <authorList>
            <person name="Jones T."/>
            <person name="Federspiel N.A."/>
            <person name="Chibana H."/>
            <person name="Dungan J."/>
            <person name="Kalman S."/>
            <person name="Magee B.B."/>
            <person name="Newport G."/>
            <person name="Thorstenson Y.R."/>
            <person name="Agabian N."/>
            <person name="Magee P.T."/>
            <person name="Davis R.W."/>
            <person name="Scherer S."/>
        </authorList>
    </citation>
    <scope>NUCLEOTIDE SEQUENCE [LARGE SCALE GENOMIC DNA]</scope>
    <source>
        <strain>SC5314 / ATCC MYA-2876</strain>
    </source>
</reference>
<reference key="2">
    <citation type="journal article" date="2007" name="Genome Biol.">
        <title>Assembly of the Candida albicans genome into sixteen supercontigs aligned on the eight chromosomes.</title>
        <authorList>
            <person name="van het Hoog M."/>
            <person name="Rast T.J."/>
            <person name="Martchenko M."/>
            <person name="Grindle S."/>
            <person name="Dignard D."/>
            <person name="Hogues H."/>
            <person name="Cuomo C."/>
            <person name="Berriman M."/>
            <person name="Scherer S."/>
            <person name="Magee B.B."/>
            <person name="Whiteway M."/>
            <person name="Chibana H."/>
            <person name="Nantel A."/>
            <person name="Magee P.T."/>
        </authorList>
    </citation>
    <scope>GENOME REANNOTATION</scope>
    <source>
        <strain>SC5314 / ATCC MYA-2876</strain>
    </source>
</reference>
<reference key="3">
    <citation type="journal article" date="2013" name="Genome Biol.">
        <title>Assembly of a phased diploid Candida albicans genome facilitates allele-specific measurements and provides a simple model for repeat and indel structure.</title>
        <authorList>
            <person name="Muzzey D."/>
            <person name="Schwartz K."/>
            <person name="Weissman J.S."/>
            <person name="Sherlock G."/>
        </authorList>
    </citation>
    <scope>NUCLEOTIDE SEQUENCE [LARGE SCALE GENOMIC DNA]</scope>
    <scope>GENOME REANNOTATION</scope>
    <source>
        <strain>SC5314 / ATCC MYA-2876</strain>
    </source>
</reference>
<dbReference type="EC" id="2.1.1.314"/>
<dbReference type="EMBL" id="CP017627">
    <property type="protein sequence ID" value="AOW29776.1"/>
    <property type="molecule type" value="Genomic_DNA"/>
</dbReference>
<dbReference type="RefSeq" id="XP_711428.2">
    <property type="nucleotide sequence ID" value="XM_706336.2"/>
</dbReference>
<dbReference type="RefSeq" id="XP_711434.2">
    <property type="nucleotide sequence ID" value="XM_706342.2"/>
</dbReference>
<dbReference type="SMR" id="Q59NX9"/>
<dbReference type="FunCoup" id="Q59NX9">
    <property type="interactions" value="986"/>
</dbReference>
<dbReference type="STRING" id="237561.Q59NX9"/>
<dbReference type="EnsemblFungi" id="C5_03640W_A-T">
    <property type="protein sequence ID" value="C5_03640W_A-T-p1"/>
    <property type="gene ID" value="C5_03640W_A"/>
</dbReference>
<dbReference type="EnsemblFungi" id="C5_03700C_A-T">
    <property type="protein sequence ID" value="C5_03700C_A-T-p1"/>
    <property type="gene ID" value="C5_03700C_A"/>
</dbReference>
<dbReference type="GeneID" id="3646984"/>
<dbReference type="KEGG" id="cal:CAALFM_C503640WA"/>
<dbReference type="KEGG" id="cal:CAALFM_C503700CA"/>
<dbReference type="CGD" id="CAL0000201007">
    <property type="gene designation" value="orf19.6676"/>
</dbReference>
<dbReference type="CGD" id="CAL0000183474">
    <property type="gene designation" value="orf19.6682"/>
</dbReference>
<dbReference type="VEuPathDB" id="FungiDB:C5_03640W_A"/>
<dbReference type="VEuPathDB" id="FungiDB:C5_03700C_A"/>
<dbReference type="eggNOG" id="KOG3123">
    <property type="taxonomic scope" value="Eukaryota"/>
</dbReference>
<dbReference type="HOGENOM" id="CLU_066040_1_0_1"/>
<dbReference type="InParanoid" id="Q59NX9"/>
<dbReference type="OMA" id="HNASIMS"/>
<dbReference type="OrthoDB" id="2516at2759"/>
<dbReference type="UniPathway" id="UPA00559"/>
<dbReference type="Proteomes" id="UP000000559">
    <property type="component" value="Chromosome 5"/>
</dbReference>
<dbReference type="GO" id="GO:0005737">
    <property type="term" value="C:cytoplasm"/>
    <property type="evidence" value="ECO:0007669"/>
    <property type="project" value="UniProtKB-SubCell"/>
</dbReference>
<dbReference type="GO" id="GO:0141133">
    <property type="term" value="F:diphthine methyl ester synthase activity"/>
    <property type="evidence" value="ECO:0007669"/>
    <property type="project" value="UniProtKB-EC"/>
</dbReference>
<dbReference type="GO" id="GO:0032259">
    <property type="term" value="P:methylation"/>
    <property type="evidence" value="ECO:0007669"/>
    <property type="project" value="UniProtKB-KW"/>
</dbReference>
<dbReference type="GO" id="GO:0017183">
    <property type="term" value="P:protein histidyl modification to diphthamide"/>
    <property type="evidence" value="ECO:0000250"/>
    <property type="project" value="UniProtKB"/>
</dbReference>
<dbReference type="CDD" id="cd11647">
    <property type="entry name" value="DHP5_DphB"/>
    <property type="match status" value="1"/>
</dbReference>
<dbReference type="FunFam" id="3.30.950.10:FF:000004">
    <property type="entry name" value="Diphthine synthase putative"/>
    <property type="match status" value="1"/>
</dbReference>
<dbReference type="FunFam" id="3.40.1010.10:FF:000004">
    <property type="entry name" value="Putative diphthine synthase"/>
    <property type="match status" value="1"/>
</dbReference>
<dbReference type="Gene3D" id="3.40.1010.10">
    <property type="entry name" value="Cobalt-precorrin-4 Transmethylase, Domain 1"/>
    <property type="match status" value="1"/>
</dbReference>
<dbReference type="Gene3D" id="3.30.950.10">
    <property type="entry name" value="Methyltransferase, Cobalt-precorrin-4 Transmethylase, Domain 2"/>
    <property type="match status" value="1"/>
</dbReference>
<dbReference type="HAMAP" id="MF_01084">
    <property type="entry name" value="Diphthine_synth"/>
    <property type="match status" value="1"/>
</dbReference>
<dbReference type="InterPro" id="IPR000878">
    <property type="entry name" value="4pyrrol_Mease"/>
</dbReference>
<dbReference type="InterPro" id="IPR035996">
    <property type="entry name" value="4pyrrol_Methylase_sf"/>
</dbReference>
<dbReference type="InterPro" id="IPR014777">
    <property type="entry name" value="4pyrrole_Mease_sub1"/>
</dbReference>
<dbReference type="InterPro" id="IPR014776">
    <property type="entry name" value="4pyrrole_Mease_sub2"/>
</dbReference>
<dbReference type="InterPro" id="IPR004551">
    <property type="entry name" value="Dphthn_synthase"/>
</dbReference>
<dbReference type="NCBIfam" id="TIGR00522">
    <property type="entry name" value="dph5"/>
    <property type="match status" value="1"/>
</dbReference>
<dbReference type="PANTHER" id="PTHR10882:SF0">
    <property type="entry name" value="DIPHTHINE METHYL ESTER SYNTHASE"/>
    <property type="match status" value="1"/>
</dbReference>
<dbReference type="PANTHER" id="PTHR10882">
    <property type="entry name" value="DIPHTHINE SYNTHASE"/>
    <property type="match status" value="1"/>
</dbReference>
<dbReference type="Pfam" id="PF00590">
    <property type="entry name" value="TP_methylase"/>
    <property type="match status" value="1"/>
</dbReference>
<dbReference type="PIRSF" id="PIRSF036432">
    <property type="entry name" value="Diphthine_synth"/>
    <property type="match status" value="1"/>
</dbReference>
<dbReference type="SUPFAM" id="SSF53790">
    <property type="entry name" value="Tetrapyrrole methylase"/>
    <property type="match status" value="1"/>
</dbReference>
<feature type="chain" id="PRO_0000156138" description="Diphthine methyl ester synthase 1">
    <location>
        <begin position="1"/>
        <end position="299"/>
    </location>
</feature>
<feature type="binding site" evidence="1">
    <location>
        <position position="9"/>
    </location>
    <ligand>
        <name>S-adenosyl-L-methionine</name>
        <dbReference type="ChEBI" id="CHEBI:59789"/>
    </ligand>
</feature>
<feature type="binding site" evidence="1">
    <location>
        <position position="85"/>
    </location>
    <ligand>
        <name>S-adenosyl-L-methionine</name>
        <dbReference type="ChEBI" id="CHEBI:59789"/>
    </ligand>
</feature>
<feature type="binding site" evidence="1">
    <location>
        <position position="88"/>
    </location>
    <ligand>
        <name>S-adenosyl-L-methionine</name>
        <dbReference type="ChEBI" id="CHEBI:59789"/>
    </ligand>
</feature>
<feature type="binding site" evidence="1">
    <location>
        <begin position="113"/>
        <end position="114"/>
    </location>
    <ligand>
        <name>S-adenosyl-L-methionine</name>
        <dbReference type="ChEBI" id="CHEBI:59789"/>
    </ligand>
</feature>
<feature type="binding site" evidence="1">
    <location>
        <position position="164"/>
    </location>
    <ligand>
        <name>S-adenosyl-L-methionine</name>
        <dbReference type="ChEBI" id="CHEBI:59789"/>
    </ligand>
</feature>
<feature type="binding site" evidence="1">
    <location>
        <position position="222"/>
    </location>
    <ligand>
        <name>S-adenosyl-L-methionine</name>
        <dbReference type="ChEBI" id="CHEBI:59789"/>
    </ligand>
</feature>
<feature type="binding site" evidence="1">
    <location>
        <position position="247"/>
    </location>
    <ligand>
        <name>S-adenosyl-L-methionine</name>
        <dbReference type="ChEBI" id="CHEBI:59789"/>
    </ligand>
</feature>
<organism>
    <name type="scientific">Candida albicans (strain SC5314 / ATCC MYA-2876)</name>
    <name type="common">Yeast</name>
    <dbReference type="NCBI Taxonomy" id="237561"/>
    <lineage>
        <taxon>Eukaryota</taxon>
        <taxon>Fungi</taxon>
        <taxon>Dikarya</taxon>
        <taxon>Ascomycota</taxon>
        <taxon>Saccharomycotina</taxon>
        <taxon>Pichiomycetes</taxon>
        <taxon>Debaryomycetaceae</taxon>
        <taxon>Candida/Lodderomyces clade</taxon>
        <taxon>Candida</taxon>
    </lineage>
</organism>
<proteinExistence type="inferred from homology"/>
<keyword id="KW-0963">Cytoplasm</keyword>
<keyword id="KW-0489">Methyltransferase</keyword>
<keyword id="KW-1185">Reference proteome</keyword>
<keyword id="KW-0949">S-adenosyl-L-methionine</keyword>
<keyword id="KW-0808">Transferase</keyword>
<accession>Q59NX9</accession>
<accession>A0A1D8PNR9</accession>
<evidence type="ECO:0000250" key="1"/>
<evidence type="ECO:0000250" key="2">
    <source>
        <dbReference type="UniProtKB" id="P32469"/>
    </source>
</evidence>
<evidence type="ECO:0000305" key="3"/>
<name>DPH51_CANAL</name>
<sequence>MLYLIGLGLSYESDITVRGLETVKKCKRVYLEAYTSILMAANQESLEKFYGREIILADRELVETGSDDILKDADKEDVAFLVVGDPFGATTHTDLVIRARELGIKVETIHNASVMNAVGACGLQLYQFGQTVSLVFFTDSWKPDSFYGKIMENRKIGLHTLLLLDIKVKEQSIENMARGRLIYEPPRYMDIATAAQQLLEIESIRQEQAYTPNTPCVAISRLGSPTQTFKAGTLQELSEYDSGEPLHSLVMLGRQVHELELEYLYQFVDDKEKFKKFVEQDQEFFKPAPYVPPEDVDSE</sequence>
<protein>
    <recommendedName>
        <fullName>Diphthine methyl ester synthase 1</fullName>
        <ecNumber>2.1.1.314</ecNumber>
    </recommendedName>
    <alternativeName>
        <fullName>Diphthamide biosynthesis methyltransferase 1</fullName>
    </alternativeName>
</protein>
<gene>
    <name type="primary">DPH5</name>
    <name type="ordered locus">CAALFM_C503640WA</name>
    <name type="ORF">CaO19.6676</name>
</gene>
<comment type="function">
    <text evidence="2">S-adenosyl-L-methionine-dependent methyltransferase that catalyzes four methylations of the modified target histidine residue in translation elongation factor 2 (EF-2), to form an intermediate called diphthine methyl ester. The four successive methylation reactions represent the second step of diphthamide biosynthesis.</text>
</comment>
<comment type="catalytic activity">
    <reaction evidence="2">
        <text>2-[(3S)-amino-3-carboxypropyl]-L-histidyl-[translation elongation factor 2] + 4 S-adenosyl-L-methionine = diphthine methyl ester-[translation elongation factor 2] + 4 S-adenosyl-L-homocysteine + 3 H(+)</text>
        <dbReference type="Rhea" id="RHEA:42652"/>
        <dbReference type="Rhea" id="RHEA-COMP:9749"/>
        <dbReference type="Rhea" id="RHEA-COMP:10173"/>
        <dbReference type="ChEBI" id="CHEBI:15378"/>
        <dbReference type="ChEBI" id="CHEBI:57856"/>
        <dbReference type="ChEBI" id="CHEBI:59789"/>
        <dbReference type="ChEBI" id="CHEBI:73995"/>
        <dbReference type="ChEBI" id="CHEBI:79005"/>
        <dbReference type="EC" id="2.1.1.314"/>
    </reaction>
</comment>
<comment type="pathway">
    <text>Protein modification; peptidyl-diphthamide biosynthesis.</text>
</comment>
<comment type="subcellular location">
    <subcellularLocation>
        <location evidence="1">Cytoplasm</location>
    </subcellularLocation>
</comment>
<comment type="similarity">
    <text evidence="3">Belongs to the diphthine synthase family.</text>
</comment>